<comment type="subunit">
    <text evidence="1">Interacts with XRCC6.</text>
</comment>
<comment type="similarity">
    <text evidence="4">Belongs to the peptidase M76 family.</text>
</comment>
<protein>
    <recommendedName>
        <fullName>Mitochondrial inner membrane protease ATP23 homolog</fullName>
        <ecNumber>3.4.24.-</ecNumber>
    </recommendedName>
    <alternativeName>
        <fullName>XRCC6-binding protein 1</fullName>
    </alternativeName>
</protein>
<name>ATP23_MOUSE</name>
<feature type="chain" id="PRO_0000330345" description="Mitochondrial inner membrane protease ATP23 homolog">
    <location>
        <begin position="1"/>
        <end position="201"/>
    </location>
</feature>
<feature type="region of interest" description="Disordered" evidence="3">
    <location>
        <begin position="1"/>
        <end position="40"/>
    </location>
</feature>
<feature type="compositionally biased region" description="Gly residues" evidence="3">
    <location>
        <begin position="1"/>
        <end position="10"/>
    </location>
</feature>
<feature type="active site" evidence="2">
    <location>
        <position position="126"/>
    </location>
</feature>
<feature type="binding site" evidence="1">
    <location>
        <position position="125"/>
    </location>
    <ligand>
        <name>a divalent metal cation</name>
        <dbReference type="ChEBI" id="CHEBI:60240"/>
        <note>catalytic</note>
    </ligand>
</feature>
<feature type="binding site" evidence="1">
    <location>
        <position position="129"/>
    </location>
    <ligand>
        <name>a divalent metal cation</name>
        <dbReference type="ChEBI" id="CHEBI:60240"/>
        <note>catalytic</note>
    </ligand>
</feature>
<organism>
    <name type="scientific">Mus musculus</name>
    <name type="common">Mouse</name>
    <dbReference type="NCBI Taxonomy" id="10090"/>
    <lineage>
        <taxon>Eukaryota</taxon>
        <taxon>Metazoa</taxon>
        <taxon>Chordata</taxon>
        <taxon>Craniata</taxon>
        <taxon>Vertebrata</taxon>
        <taxon>Euteleostomi</taxon>
        <taxon>Mammalia</taxon>
        <taxon>Eutheria</taxon>
        <taxon>Euarchontoglires</taxon>
        <taxon>Glires</taxon>
        <taxon>Rodentia</taxon>
        <taxon>Myomorpha</taxon>
        <taxon>Muroidea</taxon>
        <taxon>Muridae</taxon>
        <taxon>Murinae</taxon>
        <taxon>Mus</taxon>
        <taxon>Mus</taxon>
    </lineage>
</organism>
<accession>Q9CWQ3</accession>
<reference key="1">
    <citation type="journal article" date="2005" name="Science">
        <title>The transcriptional landscape of the mammalian genome.</title>
        <authorList>
            <person name="Carninci P."/>
            <person name="Kasukawa T."/>
            <person name="Katayama S."/>
            <person name="Gough J."/>
            <person name="Frith M.C."/>
            <person name="Maeda N."/>
            <person name="Oyama R."/>
            <person name="Ravasi T."/>
            <person name="Lenhard B."/>
            <person name="Wells C."/>
            <person name="Kodzius R."/>
            <person name="Shimokawa K."/>
            <person name="Bajic V.B."/>
            <person name="Brenner S.E."/>
            <person name="Batalov S."/>
            <person name="Forrest A.R."/>
            <person name="Zavolan M."/>
            <person name="Davis M.J."/>
            <person name="Wilming L.G."/>
            <person name="Aidinis V."/>
            <person name="Allen J.E."/>
            <person name="Ambesi-Impiombato A."/>
            <person name="Apweiler R."/>
            <person name="Aturaliya R.N."/>
            <person name="Bailey T.L."/>
            <person name="Bansal M."/>
            <person name="Baxter L."/>
            <person name="Beisel K.W."/>
            <person name="Bersano T."/>
            <person name="Bono H."/>
            <person name="Chalk A.M."/>
            <person name="Chiu K.P."/>
            <person name="Choudhary V."/>
            <person name="Christoffels A."/>
            <person name="Clutterbuck D.R."/>
            <person name="Crowe M.L."/>
            <person name="Dalla E."/>
            <person name="Dalrymple B.P."/>
            <person name="de Bono B."/>
            <person name="Della Gatta G."/>
            <person name="di Bernardo D."/>
            <person name="Down T."/>
            <person name="Engstrom P."/>
            <person name="Fagiolini M."/>
            <person name="Faulkner G."/>
            <person name="Fletcher C.F."/>
            <person name="Fukushima T."/>
            <person name="Furuno M."/>
            <person name="Futaki S."/>
            <person name="Gariboldi M."/>
            <person name="Georgii-Hemming P."/>
            <person name="Gingeras T.R."/>
            <person name="Gojobori T."/>
            <person name="Green R.E."/>
            <person name="Gustincich S."/>
            <person name="Harbers M."/>
            <person name="Hayashi Y."/>
            <person name="Hensch T.K."/>
            <person name="Hirokawa N."/>
            <person name="Hill D."/>
            <person name="Huminiecki L."/>
            <person name="Iacono M."/>
            <person name="Ikeo K."/>
            <person name="Iwama A."/>
            <person name="Ishikawa T."/>
            <person name="Jakt M."/>
            <person name="Kanapin A."/>
            <person name="Katoh M."/>
            <person name="Kawasawa Y."/>
            <person name="Kelso J."/>
            <person name="Kitamura H."/>
            <person name="Kitano H."/>
            <person name="Kollias G."/>
            <person name="Krishnan S.P."/>
            <person name="Kruger A."/>
            <person name="Kummerfeld S.K."/>
            <person name="Kurochkin I.V."/>
            <person name="Lareau L.F."/>
            <person name="Lazarevic D."/>
            <person name="Lipovich L."/>
            <person name="Liu J."/>
            <person name="Liuni S."/>
            <person name="McWilliam S."/>
            <person name="Madan Babu M."/>
            <person name="Madera M."/>
            <person name="Marchionni L."/>
            <person name="Matsuda H."/>
            <person name="Matsuzawa S."/>
            <person name="Miki H."/>
            <person name="Mignone F."/>
            <person name="Miyake S."/>
            <person name="Morris K."/>
            <person name="Mottagui-Tabar S."/>
            <person name="Mulder N."/>
            <person name="Nakano N."/>
            <person name="Nakauchi H."/>
            <person name="Ng P."/>
            <person name="Nilsson R."/>
            <person name="Nishiguchi S."/>
            <person name="Nishikawa S."/>
            <person name="Nori F."/>
            <person name="Ohara O."/>
            <person name="Okazaki Y."/>
            <person name="Orlando V."/>
            <person name="Pang K.C."/>
            <person name="Pavan W.J."/>
            <person name="Pavesi G."/>
            <person name="Pesole G."/>
            <person name="Petrovsky N."/>
            <person name="Piazza S."/>
            <person name="Reed J."/>
            <person name="Reid J.F."/>
            <person name="Ring B.Z."/>
            <person name="Ringwald M."/>
            <person name="Rost B."/>
            <person name="Ruan Y."/>
            <person name="Salzberg S.L."/>
            <person name="Sandelin A."/>
            <person name="Schneider C."/>
            <person name="Schoenbach C."/>
            <person name="Sekiguchi K."/>
            <person name="Semple C.A."/>
            <person name="Seno S."/>
            <person name="Sessa L."/>
            <person name="Sheng Y."/>
            <person name="Shibata Y."/>
            <person name="Shimada H."/>
            <person name="Shimada K."/>
            <person name="Silva D."/>
            <person name="Sinclair B."/>
            <person name="Sperling S."/>
            <person name="Stupka E."/>
            <person name="Sugiura K."/>
            <person name="Sultana R."/>
            <person name="Takenaka Y."/>
            <person name="Taki K."/>
            <person name="Tammoja K."/>
            <person name="Tan S.L."/>
            <person name="Tang S."/>
            <person name="Taylor M.S."/>
            <person name="Tegner J."/>
            <person name="Teichmann S.A."/>
            <person name="Ueda H.R."/>
            <person name="van Nimwegen E."/>
            <person name="Verardo R."/>
            <person name="Wei C.L."/>
            <person name="Yagi K."/>
            <person name="Yamanishi H."/>
            <person name="Zabarovsky E."/>
            <person name="Zhu S."/>
            <person name="Zimmer A."/>
            <person name="Hide W."/>
            <person name="Bult C."/>
            <person name="Grimmond S.M."/>
            <person name="Teasdale R.D."/>
            <person name="Liu E.T."/>
            <person name="Brusic V."/>
            <person name="Quackenbush J."/>
            <person name="Wahlestedt C."/>
            <person name="Mattick J.S."/>
            <person name="Hume D.A."/>
            <person name="Kai C."/>
            <person name="Sasaki D."/>
            <person name="Tomaru Y."/>
            <person name="Fukuda S."/>
            <person name="Kanamori-Katayama M."/>
            <person name="Suzuki M."/>
            <person name="Aoki J."/>
            <person name="Arakawa T."/>
            <person name="Iida J."/>
            <person name="Imamura K."/>
            <person name="Itoh M."/>
            <person name="Kato T."/>
            <person name="Kawaji H."/>
            <person name="Kawagashira N."/>
            <person name="Kawashima T."/>
            <person name="Kojima M."/>
            <person name="Kondo S."/>
            <person name="Konno H."/>
            <person name="Nakano K."/>
            <person name="Ninomiya N."/>
            <person name="Nishio T."/>
            <person name="Okada M."/>
            <person name="Plessy C."/>
            <person name="Shibata K."/>
            <person name="Shiraki T."/>
            <person name="Suzuki S."/>
            <person name="Tagami M."/>
            <person name="Waki K."/>
            <person name="Watahiki A."/>
            <person name="Okamura-Oho Y."/>
            <person name="Suzuki H."/>
            <person name="Kawai J."/>
            <person name="Hayashizaki Y."/>
        </authorList>
    </citation>
    <scope>NUCLEOTIDE SEQUENCE [LARGE SCALE MRNA]</scope>
    <source>
        <strain>C57BL/6J</strain>
    </source>
</reference>
<reference key="2">
    <citation type="journal article" date="2004" name="Genome Res.">
        <title>The status, quality, and expansion of the NIH full-length cDNA project: the Mammalian Gene Collection (MGC).</title>
        <authorList>
            <consortium name="The MGC Project Team"/>
        </authorList>
    </citation>
    <scope>NUCLEOTIDE SEQUENCE [LARGE SCALE MRNA]</scope>
    <source>
        <strain>C57BL/6J</strain>
        <tissue>Mammary gland</tissue>
    </source>
</reference>
<reference key="3">
    <citation type="journal article" date="2010" name="Cell">
        <title>A tissue-specific atlas of mouse protein phosphorylation and expression.</title>
        <authorList>
            <person name="Huttlin E.L."/>
            <person name="Jedrychowski M.P."/>
            <person name="Elias J.E."/>
            <person name="Goswami T."/>
            <person name="Rad R."/>
            <person name="Beausoleil S.A."/>
            <person name="Villen J."/>
            <person name="Haas W."/>
            <person name="Sowa M.E."/>
            <person name="Gygi S.P."/>
        </authorList>
    </citation>
    <scope>IDENTIFICATION BY MASS SPECTROMETRY [LARGE SCALE ANALYSIS]</scope>
    <source>
        <tissue>Brain</tissue>
        <tissue>Heart</tissue>
        <tissue>Kidney</tissue>
    </source>
</reference>
<proteinExistence type="evidence at protein level"/>
<evidence type="ECO:0000250" key="1"/>
<evidence type="ECO:0000255" key="2">
    <source>
        <dbReference type="PROSITE-ProRule" id="PRU10095"/>
    </source>
</evidence>
<evidence type="ECO:0000256" key="3">
    <source>
        <dbReference type="SAM" id="MobiDB-lite"/>
    </source>
</evidence>
<evidence type="ECO:0000305" key="4"/>
<dbReference type="EC" id="3.4.24.-"/>
<dbReference type="EMBL" id="AK010471">
    <property type="protein sequence ID" value="BAB26964.1"/>
    <property type="molecule type" value="mRNA"/>
</dbReference>
<dbReference type="EMBL" id="BC030630">
    <property type="protein sequence ID" value="AAH30630.1"/>
    <property type="molecule type" value="mRNA"/>
</dbReference>
<dbReference type="CCDS" id="CCDS24220.1"/>
<dbReference type="RefSeq" id="NP_081134.2">
    <property type="nucleotide sequence ID" value="NM_026858.3"/>
</dbReference>
<dbReference type="BioGRID" id="213095">
    <property type="interactions" value="1"/>
</dbReference>
<dbReference type="FunCoup" id="Q9CWQ3">
    <property type="interactions" value="2093"/>
</dbReference>
<dbReference type="STRING" id="10090.ENSMUSP00000128382"/>
<dbReference type="MEROPS" id="M76.001"/>
<dbReference type="PhosphoSitePlus" id="Q9CWQ3"/>
<dbReference type="PaxDb" id="10090-ENSMUSP00000128382"/>
<dbReference type="PeptideAtlas" id="Q9CWQ3"/>
<dbReference type="ProteomicsDB" id="277073"/>
<dbReference type="Pumba" id="Q9CWQ3"/>
<dbReference type="Antibodypedia" id="28994">
    <property type="antibodies" value="101 antibodies from 17 providers"/>
</dbReference>
<dbReference type="Ensembl" id="ENSMUST00000026504.13">
    <property type="protein sequence ID" value="ENSMUSP00000026504.6"/>
    <property type="gene ID" value="ENSMUSG00000025436.13"/>
</dbReference>
<dbReference type="GeneID" id="68876"/>
<dbReference type="KEGG" id="mmu:68876"/>
<dbReference type="UCSC" id="uc007hhf.2">
    <property type="organism name" value="mouse"/>
</dbReference>
<dbReference type="AGR" id="MGI:1916984"/>
<dbReference type="CTD" id="91419"/>
<dbReference type="MGI" id="MGI:1916984">
    <property type="gene designation" value="Atp23"/>
</dbReference>
<dbReference type="VEuPathDB" id="HostDB:ENSMUSG00000025436"/>
<dbReference type="eggNOG" id="KOG3314">
    <property type="taxonomic scope" value="Eukaryota"/>
</dbReference>
<dbReference type="GeneTree" id="ENSGT00390000010948"/>
<dbReference type="InParanoid" id="Q9CWQ3"/>
<dbReference type="OrthoDB" id="285308at2759"/>
<dbReference type="PhylomeDB" id="Q9CWQ3"/>
<dbReference type="BioGRID-ORCS" id="68876">
    <property type="hits" value="1 hit in 78 CRISPR screens"/>
</dbReference>
<dbReference type="ChiTaRS" id="Xrcc6bp1">
    <property type="organism name" value="mouse"/>
</dbReference>
<dbReference type="PRO" id="PR:Q9CWQ3"/>
<dbReference type="Proteomes" id="UP000000589">
    <property type="component" value="Chromosome 10"/>
</dbReference>
<dbReference type="RNAct" id="Q9CWQ3">
    <property type="molecule type" value="protein"/>
</dbReference>
<dbReference type="Bgee" id="ENSMUSG00000025436">
    <property type="expression patterns" value="Expressed in mesodermal cell in embryo and 160 other cell types or tissues"/>
</dbReference>
<dbReference type="ExpressionAtlas" id="Q9CWQ3">
    <property type="expression patterns" value="baseline and differential"/>
</dbReference>
<dbReference type="GO" id="GO:0046872">
    <property type="term" value="F:metal ion binding"/>
    <property type="evidence" value="ECO:0007669"/>
    <property type="project" value="UniProtKB-KW"/>
</dbReference>
<dbReference type="GO" id="GO:0004222">
    <property type="term" value="F:metalloendopeptidase activity"/>
    <property type="evidence" value="ECO:0007669"/>
    <property type="project" value="InterPro"/>
</dbReference>
<dbReference type="GO" id="GO:0006508">
    <property type="term" value="P:proteolysis"/>
    <property type="evidence" value="ECO:0007669"/>
    <property type="project" value="UniProtKB-KW"/>
</dbReference>
<dbReference type="InterPro" id="IPR019165">
    <property type="entry name" value="Peptidase_M76_ATP23"/>
</dbReference>
<dbReference type="PANTHER" id="PTHR21711">
    <property type="entry name" value="MITOCHONDRIAL INNER MEMBRANE PROTEASE"/>
    <property type="match status" value="1"/>
</dbReference>
<dbReference type="PANTHER" id="PTHR21711:SF0">
    <property type="entry name" value="MITOCHONDRIAL INNER MEMBRANE PROTEASE ATP23 HOMOLOG"/>
    <property type="match status" value="1"/>
</dbReference>
<dbReference type="Pfam" id="PF09768">
    <property type="entry name" value="Peptidase_M76"/>
    <property type="match status" value="1"/>
</dbReference>
<dbReference type="PROSITE" id="PS00142">
    <property type="entry name" value="ZINC_PROTEASE"/>
    <property type="match status" value="1"/>
</dbReference>
<keyword id="KW-0378">Hydrolase</keyword>
<keyword id="KW-0479">Metal-binding</keyword>
<keyword id="KW-0482">Metalloprotease</keyword>
<keyword id="KW-0645">Protease</keyword>
<keyword id="KW-1185">Reference proteome</keyword>
<gene>
    <name type="primary">Atp23</name>
    <name type="synonym">Xrcc6bp1</name>
</gene>
<sequence>MAGAPGGGELGPAAGEPLLQRPDSGQGSPEPPAHGKPQQGFLSSLFTRDQSCPLMLQKTLDTNPYVKLLLDAMKHSGCAVNRGRHFSCEVCDGNVSGGFDASTSQIVLCENNIRNQAHMGRVVTHELIHAFDHCRAHVHWFTNIRHLACSEIRAASLSGDCSLVNELFRLRFGLKQHHQIETSCVSRPAMNSQSCLGLVSA</sequence>